<feature type="signal peptide" evidence="2">
    <location>
        <begin position="1"/>
        <end position="21"/>
    </location>
</feature>
<feature type="propeptide" id="PRO_0000035525" evidence="1">
    <location>
        <begin position="22"/>
        <end position="48"/>
    </location>
</feature>
<feature type="chain" id="PRO_0000035526" description="U1-theraphotoxin-Hs1f">
    <location>
        <begin position="49"/>
        <end position="83"/>
    </location>
</feature>
<feature type="disulfide bond" evidence="1">
    <location>
        <begin position="51"/>
        <end position="64"/>
    </location>
</feature>
<feature type="disulfide bond" evidence="1">
    <location>
        <begin position="55"/>
        <end position="75"/>
    </location>
</feature>
<feature type="disulfide bond" evidence="1">
    <location>
        <begin position="69"/>
        <end position="80"/>
    </location>
</feature>
<keyword id="KW-1015">Disulfide bond</keyword>
<keyword id="KW-0528">Neurotoxin</keyword>
<keyword id="KW-0629">Postsynaptic neurotoxin</keyword>
<keyword id="KW-0964">Secreted</keyword>
<keyword id="KW-0732">Signal</keyword>
<keyword id="KW-0800">Toxin</keyword>
<comment type="function">
    <text evidence="1">Lethal neurotoxin that blocks neuromuscular transmission.</text>
</comment>
<comment type="subcellular location">
    <subcellularLocation>
        <location evidence="1">Secreted</location>
    </subcellularLocation>
</comment>
<comment type="tissue specificity">
    <text>Expressed by the venom gland.</text>
</comment>
<comment type="similarity">
    <text evidence="3">Belongs to the neurotoxin 12 (Hwtx-2) family. 02 (Hwtx-2) subfamily.</text>
</comment>
<name>TXH23_CYRSC</name>
<evidence type="ECO:0000250" key="1"/>
<evidence type="ECO:0000255" key="2"/>
<evidence type="ECO:0000305" key="3"/>
<accession>Q86C49</accession>
<dbReference type="EMBL" id="AY263710">
    <property type="protein sequence ID" value="AAP33077.1"/>
    <property type="molecule type" value="mRNA"/>
</dbReference>
<dbReference type="SMR" id="Q86C49"/>
<dbReference type="ArachnoServer" id="AS000336">
    <property type="toxin name" value="U1-theraphotoxin-Hs1f"/>
</dbReference>
<dbReference type="GO" id="GO:0005576">
    <property type="term" value="C:extracellular region"/>
    <property type="evidence" value="ECO:0007669"/>
    <property type="project" value="UniProtKB-SubCell"/>
</dbReference>
<dbReference type="GO" id="GO:0035792">
    <property type="term" value="C:host cell postsynaptic membrane"/>
    <property type="evidence" value="ECO:0007669"/>
    <property type="project" value="UniProtKB-KW"/>
</dbReference>
<dbReference type="GO" id="GO:0090729">
    <property type="term" value="F:toxin activity"/>
    <property type="evidence" value="ECO:0007669"/>
    <property type="project" value="UniProtKB-KW"/>
</dbReference>
<dbReference type="InterPro" id="IPR012625">
    <property type="entry name" value="Hwtx-2-like"/>
</dbReference>
<dbReference type="Pfam" id="PF08089">
    <property type="entry name" value="Toxin_20"/>
    <property type="match status" value="1"/>
</dbReference>
<dbReference type="SUPFAM" id="SSF57059">
    <property type="entry name" value="omega toxin-like"/>
    <property type="match status" value="1"/>
</dbReference>
<dbReference type="PROSITE" id="PS60022">
    <property type="entry name" value="HWTX_2"/>
    <property type="match status" value="1"/>
</dbReference>
<sequence>MKVTLIAILTCAAVLVLHTTAAEELEESQLMEVGMPDTELAAVDEERLFECSISCEIEKKGESCKPKKCKGGWKCKFNMCVKV</sequence>
<proteinExistence type="evidence at transcript level"/>
<reference key="1">
    <citation type="submission" date="2003-03" db="EMBL/GenBank/DDBJ databases">
        <title>cDNA sequence analysis of five peptide toxins from the spider Selenocosmia huwena: they could be classified into two different superfamilies according to the prepro region.</title>
        <authorList>
            <person name="Diao J."/>
            <person name="Liang S."/>
        </authorList>
    </citation>
    <scope>NUCLEOTIDE SEQUENCE [MRNA]</scope>
    <source>
        <tissue>Venom gland</tissue>
    </source>
</reference>
<organism>
    <name type="scientific">Cyriopagopus schmidti</name>
    <name type="common">Chinese bird spider</name>
    <name type="synonym">Haplopelma schmidti</name>
    <dbReference type="NCBI Taxonomy" id="29017"/>
    <lineage>
        <taxon>Eukaryota</taxon>
        <taxon>Metazoa</taxon>
        <taxon>Ecdysozoa</taxon>
        <taxon>Arthropoda</taxon>
        <taxon>Chelicerata</taxon>
        <taxon>Arachnida</taxon>
        <taxon>Araneae</taxon>
        <taxon>Mygalomorphae</taxon>
        <taxon>Theraphosidae</taxon>
        <taxon>Cyriopagopus</taxon>
    </lineage>
</organism>
<protein>
    <recommendedName>
        <fullName>U1-theraphotoxin-Hs1f</fullName>
        <shortName>U1-TRTX-Hs1f</shortName>
    </recommendedName>
    <alternativeName>
        <fullName>Huwentoxin-2a</fullName>
    </alternativeName>
    <alternativeName>
        <fullName>Huwentoxin-IIa</fullName>
    </alternativeName>
</protein>